<reference key="1">
    <citation type="submission" date="2000-07" db="EMBL/GenBank/DDBJ databases">
        <title>Phylogenetic relationships among putative genes encoding polygalacturonase inhibitor proteins (PGIPs) in Rosaceae.</title>
        <authorList>
            <person name="Potter D."/>
            <person name="Gao F."/>
            <person name="Oh S.-H."/>
            <person name="Baggett S."/>
        </authorList>
    </citation>
    <scope>NUCLEOTIDE SEQUENCE [GENOMIC DNA]</scope>
</reference>
<dbReference type="EMBL" id="AF288124">
    <property type="protein sequence ID" value="AAL36018.1"/>
    <property type="molecule type" value="Genomic_DNA"/>
</dbReference>
<dbReference type="GO" id="GO:0009507">
    <property type="term" value="C:chloroplast"/>
    <property type="evidence" value="ECO:0007669"/>
    <property type="project" value="UniProtKB-SubCell"/>
</dbReference>
<dbReference type="GO" id="GO:0003723">
    <property type="term" value="F:RNA binding"/>
    <property type="evidence" value="ECO:0007669"/>
    <property type="project" value="UniProtKB-KW"/>
</dbReference>
<dbReference type="GO" id="GO:0006397">
    <property type="term" value="P:mRNA processing"/>
    <property type="evidence" value="ECO:0007669"/>
    <property type="project" value="UniProtKB-KW"/>
</dbReference>
<dbReference type="GO" id="GO:0008380">
    <property type="term" value="P:RNA splicing"/>
    <property type="evidence" value="ECO:0007669"/>
    <property type="project" value="UniProtKB-UniRule"/>
</dbReference>
<dbReference type="GO" id="GO:0008033">
    <property type="term" value="P:tRNA processing"/>
    <property type="evidence" value="ECO:0007669"/>
    <property type="project" value="UniProtKB-KW"/>
</dbReference>
<dbReference type="HAMAP" id="MF_01390">
    <property type="entry name" value="MatK"/>
    <property type="match status" value="1"/>
</dbReference>
<dbReference type="InterPro" id="IPR024937">
    <property type="entry name" value="Domain_X"/>
</dbReference>
<dbReference type="InterPro" id="IPR002866">
    <property type="entry name" value="Maturase_MatK"/>
</dbReference>
<dbReference type="InterPro" id="IPR024942">
    <property type="entry name" value="Maturase_MatK_N"/>
</dbReference>
<dbReference type="PANTHER" id="PTHR34811">
    <property type="entry name" value="MATURASE K"/>
    <property type="match status" value="1"/>
</dbReference>
<dbReference type="PANTHER" id="PTHR34811:SF1">
    <property type="entry name" value="MATURASE K"/>
    <property type="match status" value="1"/>
</dbReference>
<dbReference type="Pfam" id="PF01348">
    <property type="entry name" value="Intron_maturas2"/>
    <property type="match status" value="1"/>
</dbReference>
<dbReference type="Pfam" id="PF01824">
    <property type="entry name" value="MatK_N"/>
    <property type="match status" value="1"/>
</dbReference>
<comment type="function">
    <text evidence="1">Usually encoded in the trnK tRNA gene intron. Probably assists in splicing its own and other chloroplast group II introns.</text>
</comment>
<comment type="subcellular location">
    <subcellularLocation>
        <location>Plastid</location>
        <location>Chloroplast</location>
    </subcellularLocation>
</comment>
<comment type="similarity">
    <text evidence="1">Belongs to the intron maturase 2 family. MatK subfamily.</text>
</comment>
<feature type="chain" id="PRO_0000143693" description="Maturase K">
    <location>
        <begin position="1"/>
        <end position="503"/>
    </location>
</feature>
<protein>
    <recommendedName>
        <fullName evidence="1">Maturase K</fullName>
    </recommendedName>
    <alternativeName>
        <fullName evidence="1">Intron maturase</fullName>
    </alternativeName>
</protein>
<keyword id="KW-0150">Chloroplast</keyword>
<keyword id="KW-0507">mRNA processing</keyword>
<keyword id="KW-0934">Plastid</keyword>
<keyword id="KW-0694">RNA-binding</keyword>
<keyword id="KW-0819">tRNA processing</keyword>
<accession>Q8WJN5</accession>
<gene>
    <name evidence="1" type="primary">matK</name>
</gene>
<geneLocation type="chloroplast"/>
<evidence type="ECO:0000255" key="1">
    <source>
        <dbReference type="HAMAP-Rule" id="MF_01390"/>
    </source>
</evidence>
<sequence>MEEFQGYLELDRSQQHDFLYPLIFREYIYALAHDRGLNRSVLLDNVGYDKKSSLLIIKRLISRMYQQNHFLISVNDSNQNRFLGYNKNLYSQMISEVFAVIVEIPFSLRLVSSLEETEIVKSYNLRSIHSIFPFFEDKFPHLNYASDVLIPYPIHLEILVQNLRYCVKDPSSLHLLRLFLHEYYNWNSLITPQKSIFAKSNPRLFLLLYNSYVCEYESILLFLRNQSNHLRLTSSGIFFERICFYEKIKYPVEEVLANDFPATLWFFKDPFMQYVRYRGKSILASKETPLLMNKWKYYLVNFWQCNFYVWSQPGRIHINQLSKHSLDFLGYLSSIRPNISVVRSQLLENSFLMDNAMKKLDTLVPIIPMIGSLAKVKFCNTLGHPISKSTWADSSDSDIIDRFVRIGGNLFHYYSGSSKKKSLYRIKYILRLSCVKTLARKHKSTVRTFLKRLGPKLLDEFFTEEEQIFSLLFPRASSILKRFYRGRIWYLDILCINDLVNHE</sequence>
<organism>
    <name type="scientific">Rubus ursinus</name>
    <name type="common">California blackberry</name>
    <dbReference type="NCBI Taxonomy" id="75100"/>
    <lineage>
        <taxon>Eukaryota</taxon>
        <taxon>Viridiplantae</taxon>
        <taxon>Streptophyta</taxon>
        <taxon>Embryophyta</taxon>
        <taxon>Tracheophyta</taxon>
        <taxon>Spermatophyta</taxon>
        <taxon>Magnoliopsida</taxon>
        <taxon>eudicotyledons</taxon>
        <taxon>Gunneridae</taxon>
        <taxon>Pentapetalae</taxon>
        <taxon>rosids</taxon>
        <taxon>fabids</taxon>
        <taxon>Rosales</taxon>
        <taxon>Rosaceae</taxon>
        <taxon>Rosoideae</taxon>
        <taxon>Rosoideae incertae sedis</taxon>
        <taxon>Rubus</taxon>
    </lineage>
</organism>
<name>MATK_RUBUR</name>
<proteinExistence type="inferred from homology"/>